<accession>B4TY46</accession>
<protein>
    <recommendedName>
        <fullName evidence="1">3-dehydroquinate synthase</fullName>
        <shortName evidence="1">DHQS</shortName>
        <ecNumber evidence="1">4.2.3.4</ecNumber>
    </recommendedName>
</protein>
<sequence length="362" mass="38752">MERITVTLGERSYPITIAAGLFNEPASFLPLKSGDQVMLVTNETLAPLYLDKVRGVLERAGVNVDSVILPDGEQYKSLTVLDTVFTALLKKPHGRDTTLVALGGGVIGDLTGFAAASYQRGVRFIQVPTTLLSQVDSSVGGKTAVNHPLGKNMIGAFYQPASVVVDLDCLKTLPARELASGLAEVIKYGIILDADFFTWLEENLDALLRLDGPAMAYCIRRCCELKAEVVAADEREAGLRALLNLGHTFGHAIEAEMGYGNWLHGEAVAAGIVMAARASERLGQFSSADTQRIIALLERAGLPVNGPCEMSAQDYLPHMLRDKKVLAGELRLVLPLAIGKSEVRGGVSHEVVLSAIADCQQA</sequence>
<comment type="function">
    <text evidence="1">Catalyzes the conversion of 3-deoxy-D-arabino-heptulosonate 7-phosphate (DAHP) to dehydroquinate (DHQ).</text>
</comment>
<comment type="catalytic activity">
    <reaction evidence="1">
        <text>7-phospho-2-dehydro-3-deoxy-D-arabino-heptonate = 3-dehydroquinate + phosphate</text>
        <dbReference type="Rhea" id="RHEA:21968"/>
        <dbReference type="ChEBI" id="CHEBI:32364"/>
        <dbReference type="ChEBI" id="CHEBI:43474"/>
        <dbReference type="ChEBI" id="CHEBI:58394"/>
        <dbReference type="EC" id="4.2.3.4"/>
    </reaction>
</comment>
<comment type="cofactor">
    <cofactor evidence="1">
        <name>Co(2+)</name>
        <dbReference type="ChEBI" id="CHEBI:48828"/>
    </cofactor>
    <cofactor evidence="1">
        <name>Zn(2+)</name>
        <dbReference type="ChEBI" id="CHEBI:29105"/>
    </cofactor>
    <text evidence="1">Binds 1 divalent metal cation per subunit. Can use either Co(2+) or Zn(2+).</text>
</comment>
<comment type="cofactor">
    <cofactor evidence="1">
        <name>NAD(+)</name>
        <dbReference type="ChEBI" id="CHEBI:57540"/>
    </cofactor>
</comment>
<comment type="pathway">
    <text evidence="1">Metabolic intermediate biosynthesis; chorismate biosynthesis; chorismate from D-erythrose 4-phosphate and phosphoenolpyruvate: step 2/7.</text>
</comment>
<comment type="subcellular location">
    <subcellularLocation>
        <location evidence="1">Cytoplasm</location>
    </subcellularLocation>
</comment>
<comment type="similarity">
    <text evidence="1">Belongs to the sugar phosphate cyclases superfamily. Dehydroquinate synthase family.</text>
</comment>
<keyword id="KW-0028">Amino-acid biosynthesis</keyword>
<keyword id="KW-0057">Aromatic amino acid biosynthesis</keyword>
<keyword id="KW-0170">Cobalt</keyword>
<keyword id="KW-0963">Cytoplasm</keyword>
<keyword id="KW-0456">Lyase</keyword>
<keyword id="KW-0479">Metal-binding</keyword>
<keyword id="KW-0520">NAD</keyword>
<keyword id="KW-0547">Nucleotide-binding</keyword>
<keyword id="KW-0862">Zinc</keyword>
<reference key="1">
    <citation type="journal article" date="2011" name="J. Bacteriol.">
        <title>Comparative genomics of 28 Salmonella enterica isolates: evidence for CRISPR-mediated adaptive sublineage evolution.</title>
        <authorList>
            <person name="Fricke W.F."/>
            <person name="Mammel M.K."/>
            <person name="McDermott P.F."/>
            <person name="Tartera C."/>
            <person name="White D.G."/>
            <person name="Leclerc J.E."/>
            <person name="Ravel J."/>
            <person name="Cebula T.A."/>
        </authorList>
    </citation>
    <scope>NUCLEOTIDE SEQUENCE [LARGE SCALE GENOMIC DNA]</scope>
    <source>
        <strain>CVM19633</strain>
    </source>
</reference>
<organism>
    <name type="scientific">Salmonella schwarzengrund (strain CVM19633)</name>
    <dbReference type="NCBI Taxonomy" id="439843"/>
    <lineage>
        <taxon>Bacteria</taxon>
        <taxon>Pseudomonadati</taxon>
        <taxon>Pseudomonadota</taxon>
        <taxon>Gammaproteobacteria</taxon>
        <taxon>Enterobacterales</taxon>
        <taxon>Enterobacteriaceae</taxon>
        <taxon>Salmonella</taxon>
    </lineage>
</organism>
<feature type="chain" id="PRO_1000094603" description="3-dehydroquinate synthase">
    <location>
        <begin position="1"/>
        <end position="362"/>
    </location>
</feature>
<feature type="binding site" evidence="1">
    <location>
        <begin position="71"/>
        <end position="76"/>
    </location>
    <ligand>
        <name>NAD(+)</name>
        <dbReference type="ChEBI" id="CHEBI:57540"/>
    </ligand>
</feature>
<feature type="binding site" evidence="1">
    <location>
        <begin position="105"/>
        <end position="109"/>
    </location>
    <ligand>
        <name>NAD(+)</name>
        <dbReference type="ChEBI" id="CHEBI:57540"/>
    </ligand>
</feature>
<feature type="binding site" evidence="1">
    <location>
        <begin position="129"/>
        <end position="130"/>
    </location>
    <ligand>
        <name>NAD(+)</name>
        <dbReference type="ChEBI" id="CHEBI:57540"/>
    </ligand>
</feature>
<feature type="binding site" evidence="1">
    <location>
        <position position="142"/>
    </location>
    <ligand>
        <name>NAD(+)</name>
        <dbReference type="ChEBI" id="CHEBI:57540"/>
    </ligand>
</feature>
<feature type="binding site" evidence="1">
    <location>
        <position position="151"/>
    </location>
    <ligand>
        <name>NAD(+)</name>
        <dbReference type="ChEBI" id="CHEBI:57540"/>
    </ligand>
</feature>
<feature type="binding site" evidence="1">
    <location>
        <begin position="169"/>
        <end position="172"/>
    </location>
    <ligand>
        <name>NAD(+)</name>
        <dbReference type="ChEBI" id="CHEBI:57540"/>
    </ligand>
</feature>
<feature type="binding site" evidence="1">
    <location>
        <position position="184"/>
    </location>
    <ligand>
        <name>Zn(2+)</name>
        <dbReference type="ChEBI" id="CHEBI:29105"/>
    </ligand>
</feature>
<feature type="binding site" evidence="1">
    <location>
        <position position="247"/>
    </location>
    <ligand>
        <name>Zn(2+)</name>
        <dbReference type="ChEBI" id="CHEBI:29105"/>
    </ligand>
</feature>
<feature type="binding site" evidence="1">
    <location>
        <position position="264"/>
    </location>
    <ligand>
        <name>Zn(2+)</name>
        <dbReference type="ChEBI" id="CHEBI:29105"/>
    </ligand>
</feature>
<dbReference type="EC" id="4.2.3.4" evidence="1"/>
<dbReference type="EMBL" id="CP001127">
    <property type="protein sequence ID" value="ACF89121.1"/>
    <property type="molecule type" value="Genomic_DNA"/>
</dbReference>
<dbReference type="RefSeq" id="WP_000439821.1">
    <property type="nucleotide sequence ID" value="NC_011094.1"/>
</dbReference>
<dbReference type="SMR" id="B4TY46"/>
<dbReference type="KEGG" id="sew:SeSA_A3683"/>
<dbReference type="HOGENOM" id="CLU_001201_0_2_6"/>
<dbReference type="UniPathway" id="UPA00053">
    <property type="reaction ID" value="UER00085"/>
</dbReference>
<dbReference type="Proteomes" id="UP000001865">
    <property type="component" value="Chromosome"/>
</dbReference>
<dbReference type="GO" id="GO:0005737">
    <property type="term" value="C:cytoplasm"/>
    <property type="evidence" value="ECO:0007669"/>
    <property type="project" value="UniProtKB-SubCell"/>
</dbReference>
<dbReference type="GO" id="GO:0003856">
    <property type="term" value="F:3-dehydroquinate synthase activity"/>
    <property type="evidence" value="ECO:0007669"/>
    <property type="project" value="UniProtKB-UniRule"/>
</dbReference>
<dbReference type="GO" id="GO:0046872">
    <property type="term" value="F:metal ion binding"/>
    <property type="evidence" value="ECO:0007669"/>
    <property type="project" value="UniProtKB-KW"/>
</dbReference>
<dbReference type="GO" id="GO:0000166">
    <property type="term" value="F:nucleotide binding"/>
    <property type="evidence" value="ECO:0007669"/>
    <property type="project" value="UniProtKB-KW"/>
</dbReference>
<dbReference type="GO" id="GO:0008652">
    <property type="term" value="P:amino acid biosynthetic process"/>
    <property type="evidence" value="ECO:0007669"/>
    <property type="project" value="UniProtKB-KW"/>
</dbReference>
<dbReference type="GO" id="GO:0009073">
    <property type="term" value="P:aromatic amino acid family biosynthetic process"/>
    <property type="evidence" value="ECO:0007669"/>
    <property type="project" value="UniProtKB-KW"/>
</dbReference>
<dbReference type="GO" id="GO:0009423">
    <property type="term" value="P:chorismate biosynthetic process"/>
    <property type="evidence" value="ECO:0007669"/>
    <property type="project" value="UniProtKB-UniRule"/>
</dbReference>
<dbReference type="CDD" id="cd08195">
    <property type="entry name" value="DHQS"/>
    <property type="match status" value="1"/>
</dbReference>
<dbReference type="FunFam" id="1.20.1090.10:FF:000002">
    <property type="entry name" value="3-dehydroquinate synthase"/>
    <property type="match status" value="1"/>
</dbReference>
<dbReference type="FunFam" id="3.40.50.1970:FF:000001">
    <property type="entry name" value="3-dehydroquinate synthase"/>
    <property type="match status" value="1"/>
</dbReference>
<dbReference type="Gene3D" id="3.40.50.1970">
    <property type="match status" value="1"/>
</dbReference>
<dbReference type="Gene3D" id="1.20.1090.10">
    <property type="entry name" value="Dehydroquinate synthase-like - alpha domain"/>
    <property type="match status" value="1"/>
</dbReference>
<dbReference type="HAMAP" id="MF_00110">
    <property type="entry name" value="DHQ_synthase"/>
    <property type="match status" value="1"/>
</dbReference>
<dbReference type="InterPro" id="IPR050071">
    <property type="entry name" value="Dehydroquinate_synthase"/>
</dbReference>
<dbReference type="InterPro" id="IPR016037">
    <property type="entry name" value="DHQ_synth_AroB"/>
</dbReference>
<dbReference type="InterPro" id="IPR030963">
    <property type="entry name" value="DHQ_synth_fam"/>
</dbReference>
<dbReference type="InterPro" id="IPR030960">
    <property type="entry name" value="DHQS/DOIS_N"/>
</dbReference>
<dbReference type="InterPro" id="IPR056179">
    <property type="entry name" value="DHQS_C"/>
</dbReference>
<dbReference type="NCBIfam" id="TIGR01357">
    <property type="entry name" value="aroB"/>
    <property type="match status" value="1"/>
</dbReference>
<dbReference type="PANTHER" id="PTHR43622">
    <property type="entry name" value="3-DEHYDROQUINATE SYNTHASE"/>
    <property type="match status" value="1"/>
</dbReference>
<dbReference type="PANTHER" id="PTHR43622:SF7">
    <property type="entry name" value="3-DEHYDROQUINATE SYNTHASE, CHLOROPLASTIC"/>
    <property type="match status" value="1"/>
</dbReference>
<dbReference type="Pfam" id="PF01761">
    <property type="entry name" value="DHQ_synthase"/>
    <property type="match status" value="1"/>
</dbReference>
<dbReference type="Pfam" id="PF24621">
    <property type="entry name" value="DHQS_C"/>
    <property type="match status" value="1"/>
</dbReference>
<dbReference type="PIRSF" id="PIRSF001455">
    <property type="entry name" value="DHQ_synth"/>
    <property type="match status" value="1"/>
</dbReference>
<dbReference type="SUPFAM" id="SSF56796">
    <property type="entry name" value="Dehydroquinate synthase-like"/>
    <property type="match status" value="1"/>
</dbReference>
<proteinExistence type="inferred from homology"/>
<name>AROB_SALSV</name>
<evidence type="ECO:0000255" key="1">
    <source>
        <dbReference type="HAMAP-Rule" id="MF_00110"/>
    </source>
</evidence>
<gene>
    <name evidence="1" type="primary">aroB</name>
    <name type="ordered locus">SeSA_A3683</name>
</gene>